<gene>
    <name type="primary">PSK4</name>
    <name type="ordered locus">Os07g0124100</name>
    <name type="ordered locus">LOC_Os07g03200</name>
    <name type="ORF">OJ1007_H09.107</name>
    <name evidence="5" type="ORF">OsJ_22943</name>
    <name type="ORF">OSJNBa0057M23.146</name>
    <name type="ORF">P0474G09.107</name>
</gene>
<accession>Q9AR88</accession>
<accession>Q0D8V6</accession>
<accession>Q7F2B2</accession>
<protein>
    <recommendedName>
        <fullName>Phytosulfokines 4</fullName>
    </recommendedName>
    <component>
        <recommendedName>
            <fullName>Phytosulfokine-alpha</fullName>
            <shortName>PSK-alpha</shortName>
            <shortName>Phytosulfokine-a</shortName>
        </recommendedName>
    </component>
    <component>
        <recommendedName>
            <fullName>Phytosulfokine-beta</fullName>
            <shortName>PSK-beta</shortName>
            <shortName>Phytosulfokine-b</shortName>
        </recommendedName>
    </component>
</protein>
<proteinExistence type="evidence at protein level"/>
<reference key="1">
    <citation type="submission" date="2000-03" db="EMBL/GenBank/DDBJ databases">
        <title>Precursor homologs of the PSK-alpha peptide growth factor are conserved in structure but not primary sequence: identification and characterization of the rice gene family.</title>
        <authorList>
            <person name="Lorbiecke R."/>
            <person name="Sauter M."/>
        </authorList>
    </citation>
    <scope>NUCLEOTIDE SEQUENCE [MRNA]</scope>
</reference>
<reference key="2">
    <citation type="journal article" date="2005" name="Nature">
        <title>The map-based sequence of the rice genome.</title>
        <authorList>
            <consortium name="International rice genome sequencing project (IRGSP)"/>
        </authorList>
    </citation>
    <scope>NUCLEOTIDE SEQUENCE [LARGE SCALE GENOMIC DNA]</scope>
    <source>
        <strain>cv. Nipponbare</strain>
    </source>
</reference>
<reference key="3">
    <citation type="journal article" date="2008" name="Nucleic Acids Res.">
        <title>The rice annotation project database (RAP-DB): 2008 update.</title>
        <authorList>
            <consortium name="The rice annotation project (RAP)"/>
        </authorList>
    </citation>
    <scope>GENOME REANNOTATION</scope>
    <source>
        <strain>cv. Nipponbare</strain>
    </source>
</reference>
<reference key="4">
    <citation type="journal article" date="2013" name="Rice">
        <title>Improvement of the Oryza sativa Nipponbare reference genome using next generation sequence and optical map data.</title>
        <authorList>
            <person name="Kawahara Y."/>
            <person name="de la Bastide M."/>
            <person name="Hamilton J.P."/>
            <person name="Kanamori H."/>
            <person name="McCombie W.R."/>
            <person name="Ouyang S."/>
            <person name="Schwartz D.C."/>
            <person name="Tanaka T."/>
            <person name="Wu J."/>
            <person name="Zhou S."/>
            <person name="Childs K.L."/>
            <person name="Davidson R.M."/>
            <person name="Lin H."/>
            <person name="Quesada-Ocampo L."/>
            <person name="Vaillancourt B."/>
            <person name="Sakai H."/>
            <person name="Lee S.S."/>
            <person name="Kim J."/>
            <person name="Numa H."/>
            <person name="Itoh T."/>
            <person name="Buell C.R."/>
            <person name="Matsumoto T."/>
        </authorList>
    </citation>
    <scope>GENOME REANNOTATION</scope>
    <source>
        <strain>cv. Nipponbare</strain>
    </source>
</reference>
<reference key="5">
    <citation type="journal article" date="2005" name="PLoS Biol.">
        <title>The genomes of Oryza sativa: a history of duplications.</title>
        <authorList>
            <person name="Yu J."/>
            <person name="Wang J."/>
            <person name="Lin W."/>
            <person name="Li S."/>
            <person name="Li H."/>
            <person name="Zhou J."/>
            <person name="Ni P."/>
            <person name="Dong W."/>
            <person name="Hu S."/>
            <person name="Zeng C."/>
            <person name="Zhang J."/>
            <person name="Zhang Y."/>
            <person name="Li R."/>
            <person name="Xu Z."/>
            <person name="Li S."/>
            <person name="Li X."/>
            <person name="Zheng H."/>
            <person name="Cong L."/>
            <person name="Lin L."/>
            <person name="Yin J."/>
            <person name="Geng J."/>
            <person name="Li G."/>
            <person name="Shi J."/>
            <person name="Liu J."/>
            <person name="Lv H."/>
            <person name="Li J."/>
            <person name="Wang J."/>
            <person name="Deng Y."/>
            <person name="Ran L."/>
            <person name="Shi X."/>
            <person name="Wang X."/>
            <person name="Wu Q."/>
            <person name="Li C."/>
            <person name="Ren X."/>
            <person name="Wang J."/>
            <person name="Wang X."/>
            <person name="Li D."/>
            <person name="Liu D."/>
            <person name="Zhang X."/>
            <person name="Ji Z."/>
            <person name="Zhao W."/>
            <person name="Sun Y."/>
            <person name="Zhang Z."/>
            <person name="Bao J."/>
            <person name="Han Y."/>
            <person name="Dong L."/>
            <person name="Ji J."/>
            <person name="Chen P."/>
            <person name="Wu S."/>
            <person name="Liu J."/>
            <person name="Xiao Y."/>
            <person name="Bu D."/>
            <person name="Tan J."/>
            <person name="Yang L."/>
            <person name="Ye C."/>
            <person name="Zhang J."/>
            <person name="Xu J."/>
            <person name="Zhou Y."/>
            <person name="Yu Y."/>
            <person name="Zhang B."/>
            <person name="Zhuang S."/>
            <person name="Wei H."/>
            <person name="Liu B."/>
            <person name="Lei M."/>
            <person name="Yu H."/>
            <person name="Li Y."/>
            <person name="Xu H."/>
            <person name="Wei S."/>
            <person name="He X."/>
            <person name="Fang L."/>
            <person name="Zhang Z."/>
            <person name="Zhang Y."/>
            <person name="Huang X."/>
            <person name="Su Z."/>
            <person name="Tong W."/>
            <person name="Li J."/>
            <person name="Tong Z."/>
            <person name="Li S."/>
            <person name="Ye J."/>
            <person name="Wang L."/>
            <person name="Fang L."/>
            <person name="Lei T."/>
            <person name="Chen C.-S."/>
            <person name="Chen H.-C."/>
            <person name="Xu Z."/>
            <person name="Li H."/>
            <person name="Huang H."/>
            <person name="Zhang F."/>
            <person name="Xu H."/>
            <person name="Li N."/>
            <person name="Zhao C."/>
            <person name="Li S."/>
            <person name="Dong L."/>
            <person name="Huang Y."/>
            <person name="Li L."/>
            <person name="Xi Y."/>
            <person name="Qi Q."/>
            <person name="Li W."/>
            <person name="Zhang B."/>
            <person name="Hu W."/>
            <person name="Zhang Y."/>
            <person name="Tian X."/>
            <person name="Jiao Y."/>
            <person name="Liang X."/>
            <person name="Jin J."/>
            <person name="Gao L."/>
            <person name="Zheng W."/>
            <person name="Hao B."/>
            <person name="Liu S.-M."/>
            <person name="Wang W."/>
            <person name="Yuan L."/>
            <person name="Cao M."/>
            <person name="McDermott J."/>
            <person name="Samudrala R."/>
            <person name="Wang J."/>
            <person name="Wong G.K.-S."/>
            <person name="Yang H."/>
        </authorList>
    </citation>
    <scope>NUCLEOTIDE SEQUENCE [LARGE SCALE GENOMIC DNA]</scope>
    <source>
        <strain>cv. Nipponbare</strain>
    </source>
</reference>
<reference key="6">
    <citation type="journal article" date="1997" name="Proc. Natl. Acad. Sci. U.S.A.">
        <title>Phytosulfokine-alpha, a sulfated pentapeptide, stimulates the proliferation of rice cells by means of specific high- and low-affinity binding sites.</title>
        <authorList>
            <person name="Matsubayashi Y."/>
            <person name="Takagi L."/>
            <person name="Sakagami Y."/>
        </authorList>
    </citation>
    <scope>PROTEIN SEQUENCE OF PSK-ALPHA AND PSK-BETA</scope>
    <scope>CHARACTERIZATION</scope>
    <scope>SULFATION AT TYR-75 AND TYR-77</scope>
</reference>
<organism>
    <name type="scientific">Oryza sativa subsp. japonica</name>
    <name type="common">Rice</name>
    <dbReference type="NCBI Taxonomy" id="39947"/>
    <lineage>
        <taxon>Eukaryota</taxon>
        <taxon>Viridiplantae</taxon>
        <taxon>Streptophyta</taxon>
        <taxon>Embryophyta</taxon>
        <taxon>Tracheophyta</taxon>
        <taxon>Spermatophyta</taxon>
        <taxon>Magnoliopsida</taxon>
        <taxon>Liliopsida</taxon>
        <taxon>Poales</taxon>
        <taxon>Poaceae</taxon>
        <taxon>BOP clade</taxon>
        <taxon>Oryzoideae</taxon>
        <taxon>Oryzeae</taxon>
        <taxon>Oryzinae</taxon>
        <taxon>Oryza</taxon>
        <taxon>Oryza sativa</taxon>
    </lineage>
</organism>
<feature type="signal peptide" evidence="2">
    <location>
        <begin position="1"/>
        <end position="28"/>
    </location>
</feature>
<feature type="propeptide" id="PRO_0000024073" evidence="2">
    <location>
        <begin position="29"/>
        <end position="74"/>
    </location>
</feature>
<feature type="peptide" id="PRO_0000024074" description="Phytosulfokine-alpha" evidence="3">
    <location>
        <begin position="75"/>
        <end position="79"/>
    </location>
</feature>
<feature type="peptide" id="PRO_0000024075" description="Phytosulfokine-beta" evidence="3">
    <location>
        <begin position="75"/>
        <end position="78"/>
    </location>
</feature>
<feature type="propeptide" id="PRO_0000024076" evidence="2">
    <location>
        <begin position="80"/>
        <end position="83"/>
    </location>
</feature>
<feature type="modified residue" description="Sulfotyrosine" evidence="3">
    <location>
        <position position="75"/>
    </location>
</feature>
<feature type="modified residue" description="Sulfotyrosine" evidence="3">
    <location>
        <position position="77"/>
    </location>
</feature>
<sequence length="83" mass="8575">MAARTVAVAAALAVLLIFAASSATVAMAGRPTPTTSLDEEAAQAAAQSEIGGGCKEGEGEEECLARRTLTAHTDYIYTQQHHN</sequence>
<evidence type="ECO:0000250" key="1"/>
<evidence type="ECO:0000255" key="2"/>
<evidence type="ECO:0000269" key="3">
    <source>
    </source>
</evidence>
<evidence type="ECO:0000305" key="4"/>
<evidence type="ECO:0000312" key="5">
    <source>
        <dbReference type="EMBL" id="EAZ38554.1"/>
    </source>
</evidence>
<comment type="function">
    <text>Promotes plant cell differentiation, organogenesis and somatic embryogenesis as well as cell proliferation.</text>
</comment>
<comment type="subcellular location">
    <subcellularLocation>
        <location evidence="1">Secreted</location>
    </subcellularLocation>
</comment>
<comment type="PTM">
    <text evidence="3">Sulfation is important for activity and for the binding to a putative membrane receptor.</text>
</comment>
<comment type="PTM">
    <text>PSK-alpha is produced by endopeptidase digestion. PSK-beta is produced from PSK-alpha by exopeptidase digestion.</text>
</comment>
<comment type="similarity">
    <text evidence="4">Belongs to the phytosulfokine family.</text>
</comment>
<keyword id="KW-0217">Developmental protein</keyword>
<keyword id="KW-0221">Differentiation</keyword>
<keyword id="KW-0903">Direct protein sequencing</keyword>
<keyword id="KW-0339">Growth factor</keyword>
<keyword id="KW-1185">Reference proteome</keyword>
<keyword id="KW-0964">Secreted</keyword>
<keyword id="KW-0732">Signal</keyword>
<keyword id="KW-0765">Sulfation</keyword>
<dbReference type="EMBL" id="AJ276693">
    <property type="protein sequence ID" value="CAC34733.1"/>
    <property type="molecule type" value="mRNA"/>
</dbReference>
<dbReference type="EMBL" id="AP003702">
    <property type="protein sequence ID" value="BAC79504.1"/>
    <property type="molecule type" value="Genomic_DNA"/>
</dbReference>
<dbReference type="EMBL" id="AP005165">
    <property type="protein sequence ID" value="BAD30966.1"/>
    <property type="molecule type" value="Genomic_DNA"/>
</dbReference>
<dbReference type="EMBL" id="AP005309">
    <property type="protein sequence ID" value="BAD31301.1"/>
    <property type="molecule type" value="Genomic_DNA"/>
</dbReference>
<dbReference type="EMBL" id="AP008213">
    <property type="protein sequence ID" value="BAF20717.1"/>
    <property type="molecule type" value="Genomic_DNA"/>
</dbReference>
<dbReference type="EMBL" id="AP014963">
    <property type="protein sequence ID" value="BAS99883.1"/>
    <property type="molecule type" value="Genomic_DNA"/>
</dbReference>
<dbReference type="EMBL" id="CM000144">
    <property type="protein sequence ID" value="EAZ38554.1"/>
    <property type="molecule type" value="Genomic_DNA"/>
</dbReference>
<dbReference type="RefSeq" id="XP_015645556.1">
    <property type="nucleotide sequence ID" value="XM_015790070.1"/>
</dbReference>
<dbReference type="FunCoup" id="Q9AR88">
    <property type="interactions" value="16"/>
</dbReference>
<dbReference type="STRING" id="39947.Q9AR88"/>
<dbReference type="PaxDb" id="39947-Q9AR88"/>
<dbReference type="EnsemblPlants" id="Os07t0124100-01">
    <property type="protein sequence ID" value="Os07t0124100-01"/>
    <property type="gene ID" value="Os07g0124100"/>
</dbReference>
<dbReference type="Gramene" id="Os07t0124100-01">
    <property type="protein sequence ID" value="Os07t0124100-01"/>
    <property type="gene ID" value="Os07g0124100"/>
</dbReference>
<dbReference type="KEGG" id="dosa:Os07g0124100"/>
<dbReference type="eggNOG" id="ENOG502SC6Q">
    <property type="taxonomic scope" value="Eukaryota"/>
</dbReference>
<dbReference type="HOGENOM" id="CLU_165727_0_1_1"/>
<dbReference type="InParanoid" id="Q9AR88"/>
<dbReference type="OMA" id="YTQQHHG"/>
<dbReference type="Proteomes" id="UP000000763">
    <property type="component" value="Chromosome 7"/>
</dbReference>
<dbReference type="Proteomes" id="UP000007752">
    <property type="component" value="Chromosome 7"/>
</dbReference>
<dbReference type="Proteomes" id="UP000059680">
    <property type="component" value="Chromosome 7"/>
</dbReference>
<dbReference type="GO" id="GO:0005576">
    <property type="term" value="C:extracellular region"/>
    <property type="evidence" value="ECO:0007669"/>
    <property type="project" value="UniProtKB-SubCell"/>
</dbReference>
<dbReference type="GO" id="GO:0008083">
    <property type="term" value="F:growth factor activity"/>
    <property type="evidence" value="ECO:0007669"/>
    <property type="project" value="UniProtKB-KW"/>
</dbReference>
<dbReference type="GO" id="GO:0030154">
    <property type="term" value="P:cell differentiation"/>
    <property type="evidence" value="ECO:0007669"/>
    <property type="project" value="UniProtKB-KW"/>
</dbReference>
<dbReference type="GO" id="GO:0008283">
    <property type="term" value="P:cell population proliferation"/>
    <property type="evidence" value="ECO:0007669"/>
    <property type="project" value="InterPro"/>
</dbReference>
<dbReference type="InterPro" id="IPR009438">
    <property type="entry name" value="Phytosulfokine"/>
</dbReference>
<dbReference type="PANTHER" id="PTHR33285">
    <property type="entry name" value="PHYTOSULFOKINES 3"/>
    <property type="match status" value="1"/>
</dbReference>
<dbReference type="PANTHER" id="PTHR33285:SF40">
    <property type="entry name" value="PHYTOSULFOKINES 4"/>
    <property type="match status" value="1"/>
</dbReference>
<dbReference type="Pfam" id="PF06404">
    <property type="entry name" value="PSK"/>
    <property type="match status" value="1"/>
</dbReference>
<name>PSK4_ORYSJ</name>